<name>DADA_ECOSE</name>
<reference key="1">
    <citation type="journal article" date="2008" name="DNA Res.">
        <title>Complete genome sequence and comparative analysis of the wild-type commensal Escherichia coli strain SE11 isolated from a healthy adult.</title>
        <authorList>
            <person name="Oshima K."/>
            <person name="Toh H."/>
            <person name="Ogura Y."/>
            <person name="Sasamoto H."/>
            <person name="Morita H."/>
            <person name="Park S.-H."/>
            <person name="Ooka T."/>
            <person name="Iyoda S."/>
            <person name="Taylor T.D."/>
            <person name="Hayashi T."/>
            <person name="Itoh K."/>
            <person name="Hattori M."/>
        </authorList>
    </citation>
    <scope>NUCLEOTIDE SEQUENCE [LARGE SCALE GENOMIC DNA]</scope>
    <source>
        <strain>SE11</strain>
    </source>
</reference>
<keyword id="KW-0274">FAD</keyword>
<keyword id="KW-0285">Flavoprotein</keyword>
<keyword id="KW-0560">Oxidoreductase</keyword>
<gene>
    <name evidence="1" type="primary">dadA</name>
    <name type="ordered locus">ECSE_1237</name>
</gene>
<dbReference type="EC" id="1.4.99.-" evidence="1"/>
<dbReference type="EMBL" id="AP009240">
    <property type="protein sequence ID" value="BAG76761.1"/>
    <property type="molecule type" value="Genomic_DNA"/>
</dbReference>
<dbReference type="RefSeq" id="WP_001266908.1">
    <property type="nucleotide sequence ID" value="NC_011415.1"/>
</dbReference>
<dbReference type="SMR" id="B6I9Q0"/>
<dbReference type="GeneID" id="93776243"/>
<dbReference type="KEGG" id="ecy:ECSE_1237"/>
<dbReference type="HOGENOM" id="CLU_007884_9_2_6"/>
<dbReference type="UniPathway" id="UPA00043">
    <property type="reaction ID" value="UER00498"/>
</dbReference>
<dbReference type="Proteomes" id="UP000008199">
    <property type="component" value="Chromosome"/>
</dbReference>
<dbReference type="GO" id="GO:0005737">
    <property type="term" value="C:cytoplasm"/>
    <property type="evidence" value="ECO:0007669"/>
    <property type="project" value="TreeGrafter"/>
</dbReference>
<dbReference type="GO" id="GO:0005886">
    <property type="term" value="C:plasma membrane"/>
    <property type="evidence" value="ECO:0007669"/>
    <property type="project" value="TreeGrafter"/>
</dbReference>
<dbReference type="GO" id="GO:0008718">
    <property type="term" value="F:D-amino-acid dehydrogenase activity"/>
    <property type="evidence" value="ECO:0007669"/>
    <property type="project" value="UniProtKB-UniRule"/>
</dbReference>
<dbReference type="GO" id="GO:0055130">
    <property type="term" value="P:D-alanine catabolic process"/>
    <property type="evidence" value="ECO:0007669"/>
    <property type="project" value="UniProtKB-UniPathway"/>
</dbReference>
<dbReference type="FunFam" id="3.50.50.60:FF:000020">
    <property type="entry name" value="D-amino acid dehydrogenase"/>
    <property type="match status" value="1"/>
</dbReference>
<dbReference type="Gene3D" id="3.30.9.10">
    <property type="entry name" value="D-Amino Acid Oxidase, subunit A, domain 2"/>
    <property type="match status" value="1"/>
</dbReference>
<dbReference type="Gene3D" id="3.50.50.60">
    <property type="entry name" value="FAD/NAD(P)-binding domain"/>
    <property type="match status" value="2"/>
</dbReference>
<dbReference type="HAMAP" id="MF_01202">
    <property type="entry name" value="DadA"/>
    <property type="match status" value="1"/>
</dbReference>
<dbReference type="InterPro" id="IPR023080">
    <property type="entry name" value="DadA"/>
</dbReference>
<dbReference type="InterPro" id="IPR006076">
    <property type="entry name" value="FAD-dep_OxRdtase"/>
</dbReference>
<dbReference type="InterPro" id="IPR036188">
    <property type="entry name" value="FAD/NAD-bd_sf"/>
</dbReference>
<dbReference type="NCBIfam" id="NF001933">
    <property type="entry name" value="PRK00711.1"/>
    <property type="match status" value="1"/>
</dbReference>
<dbReference type="PANTHER" id="PTHR13847:SF280">
    <property type="entry name" value="D-AMINO ACID DEHYDROGENASE"/>
    <property type="match status" value="1"/>
</dbReference>
<dbReference type="PANTHER" id="PTHR13847">
    <property type="entry name" value="SARCOSINE DEHYDROGENASE-RELATED"/>
    <property type="match status" value="1"/>
</dbReference>
<dbReference type="Pfam" id="PF01266">
    <property type="entry name" value="DAO"/>
    <property type="match status" value="1"/>
</dbReference>
<dbReference type="SUPFAM" id="SSF54373">
    <property type="entry name" value="FAD-linked reductases, C-terminal domain"/>
    <property type="match status" value="1"/>
</dbReference>
<dbReference type="SUPFAM" id="SSF51905">
    <property type="entry name" value="FAD/NAD(P)-binding domain"/>
    <property type="match status" value="1"/>
</dbReference>
<proteinExistence type="inferred from homology"/>
<sequence>MRVVILGSGVVGVASAWYLNQAGHEVTVIDREPGAALETSAANAGQISPGYAAPWAAPGVPLKAIKWMFQRHAPLAVRLDGTQFQLKWMWQMLRNCDTSHYMENKGRMVRLAEYSRDCLKALRAETNIQYEGRQGGTLQLFRTEQQYENATRDIAVLEDAGVPYQLLESSRLAEVEPALAEVAHKLTGGLQLPNDETGDCQLFTQNLARMAEQAGVKFRFNTPVDQLLCDGEQIYGVKCGDEVIKADAYVMAFGSYSTAMLKGIVDIPVYPLKGYSLTIPIAQEDGAPVSTILDETYKIAITRFDNRIRVGGMAEIVGFNTELLQPRRETLEMVVRDLYPRGGHVEQATFWTGLRPMTPDGTPVVGRTRFKNLWLNTGHGTLGWTMACGSGQLLSDLLSGRTPAIPYEDLSVARYSRGFTPSRPGHLHGAHS</sequence>
<evidence type="ECO:0000255" key="1">
    <source>
        <dbReference type="HAMAP-Rule" id="MF_01202"/>
    </source>
</evidence>
<accession>B6I9Q0</accession>
<protein>
    <recommendedName>
        <fullName evidence="1">D-amino acid dehydrogenase</fullName>
        <ecNumber evidence="1">1.4.99.-</ecNumber>
    </recommendedName>
</protein>
<comment type="function">
    <text evidence="1">Oxidative deamination of D-amino acids.</text>
</comment>
<comment type="catalytic activity">
    <reaction evidence="1">
        <text>a D-alpha-amino acid + A + H2O = a 2-oxocarboxylate + AH2 + NH4(+)</text>
        <dbReference type="Rhea" id="RHEA:18125"/>
        <dbReference type="ChEBI" id="CHEBI:13193"/>
        <dbReference type="ChEBI" id="CHEBI:15377"/>
        <dbReference type="ChEBI" id="CHEBI:17499"/>
        <dbReference type="ChEBI" id="CHEBI:28938"/>
        <dbReference type="ChEBI" id="CHEBI:35179"/>
        <dbReference type="ChEBI" id="CHEBI:59871"/>
    </reaction>
</comment>
<comment type="cofactor">
    <cofactor evidence="1">
        <name>FAD</name>
        <dbReference type="ChEBI" id="CHEBI:57692"/>
    </cofactor>
</comment>
<comment type="pathway">
    <text>Amino-acid degradation; D-alanine degradation; NH(3) and pyruvate from D-alanine: step 1/1.</text>
</comment>
<comment type="similarity">
    <text evidence="1">Belongs to the DadA oxidoreductase family.</text>
</comment>
<feature type="chain" id="PRO_1000138653" description="D-amino acid dehydrogenase">
    <location>
        <begin position="1"/>
        <end position="432"/>
    </location>
</feature>
<feature type="binding site" evidence="1">
    <location>
        <begin position="3"/>
        <end position="17"/>
    </location>
    <ligand>
        <name>FAD</name>
        <dbReference type="ChEBI" id="CHEBI:57692"/>
    </ligand>
</feature>
<organism>
    <name type="scientific">Escherichia coli (strain SE11)</name>
    <dbReference type="NCBI Taxonomy" id="409438"/>
    <lineage>
        <taxon>Bacteria</taxon>
        <taxon>Pseudomonadati</taxon>
        <taxon>Pseudomonadota</taxon>
        <taxon>Gammaproteobacteria</taxon>
        <taxon>Enterobacterales</taxon>
        <taxon>Enterobacteriaceae</taxon>
        <taxon>Escherichia</taxon>
    </lineage>
</organism>